<dbReference type="EC" id="2.1.1.298" evidence="1"/>
<dbReference type="EMBL" id="AE003852">
    <property type="protein sequence ID" value="AAF95263.1"/>
    <property type="molecule type" value="Genomic_DNA"/>
</dbReference>
<dbReference type="PIR" id="H82115">
    <property type="entry name" value="H82115"/>
</dbReference>
<dbReference type="RefSeq" id="NP_231749.1">
    <property type="nucleotide sequence ID" value="NC_002505.1"/>
</dbReference>
<dbReference type="SMR" id="Q9KQ83"/>
<dbReference type="STRING" id="243277.VC_2118"/>
<dbReference type="DNASU" id="2613374"/>
<dbReference type="EnsemblBacteria" id="AAF95263">
    <property type="protein sequence ID" value="AAF95263"/>
    <property type="gene ID" value="VC_2118"/>
</dbReference>
<dbReference type="KEGG" id="vch:VC_2118"/>
<dbReference type="PATRIC" id="fig|243277.26.peg.2023"/>
<dbReference type="eggNOG" id="COG2890">
    <property type="taxonomic scope" value="Bacteria"/>
</dbReference>
<dbReference type="HOGENOM" id="CLU_018398_5_1_6"/>
<dbReference type="Proteomes" id="UP000000584">
    <property type="component" value="Chromosome 1"/>
</dbReference>
<dbReference type="GO" id="GO:0005829">
    <property type="term" value="C:cytosol"/>
    <property type="evidence" value="ECO:0000318"/>
    <property type="project" value="GO_Central"/>
</dbReference>
<dbReference type="GO" id="GO:0003676">
    <property type="term" value="F:nucleic acid binding"/>
    <property type="evidence" value="ECO:0007669"/>
    <property type="project" value="InterPro"/>
</dbReference>
<dbReference type="GO" id="GO:0036009">
    <property type="term" value="F:protein-glutamine N-methyltransferase activity"/>
    <property type="evidence" value="ECO:0000318"/>
    <property type="project" value="GO_Central"/>
</dbReference>
<dbReference type="GO" id="GO:0032259">
    <property type="term" value="P:methylation"/>
    <property type="evidence" value="ECO:0007669"/>
    <property type="project" value="UniProtKB-KW"/>
</dbReference>
<dbReference type="CDD" id="cd02440">
    <property type="entry name" value="AdoMet_MTases"/>
    <property type="match status" value="1"/>
</dbReference>
<dbReference type="FunFam" id="1.10.8.10:FF:000022">
    <property type="entry name" value="50S ribosomal protein L3 glutamine methyltransferase"/>
    <property type="match status" value="1"/>
</dbReference>
<dbReference type="FunFam" id="3.40.50.150:FF:000042">
    <property type="entry name" value="50S ribosomal protein L3 glutamine methyltransferase"/>
    <property type="match status" value="1"/>
</dbReference>
<dbReference type="Gene3D" id="1.10.8.10">
    <property type="entry name" value="DNA helicase RuvA subunit, C-terminal domain"/>
    <property type="match status" value="1"/>
</dbReference>
<dbReference type="Gene3D" id="3.40.50.150">
    <property type="entry name" value="Vaccinia Virus protein VP39"/>
    <property type="match status" value="1"/>
</dbReference>
<dbReference type="HAMAP" id="MF_02125">
    <property type="entry name" value="L3_methyltr_PrmB"/>
    <property type="match status" value="1"/>
</dbReference>
<dbReference type="InterPro" id="IPR002052">
    <property type="entry name" value="DNA_methylase_N6_adenine_CS"/>
</dbReference>
<dbReference type="InterPro" id="IPR004556">
    <property type="entry name" value="HemK-like"/>
</dbReference>
<dbReference type="InterPro" id="IPR017127">
    <property type="entry name" value="Ribosome_uL3_MTase"/>
</dbReference>
<dbReference type="InterPro" id="IPR029063">
    <property type="entry name" value="SAM-dependent_MTases_sf"/>
</dbReference>
<dbReference type="InterPro" id="IPR007848">
    <property type="entry name" value="Small_mtfrase_dom"/>
</dbReference>
<dbReference type="NCBIfam" id="TIGR00536">
    <property type="entry name" value="hemK_fam"/>
    <property type="match status" value="1"/>
</dbReference>
<dbReference type="NCBIfam" id="TIGR03533">
    <property type="entry name" value="L3_gln_methyl"/>
    <property type="match status" value="1"/>
</dbReference>
<dbReference type="PANTHER" id="PTHR47806">
    <property type="entry name" value="50S RIBOSOMAL PROTEIN L3 GLUTAMINE METHYLTRANSFERASE"/>
    <property type="match status" value="1"/>
</dbReference>
<dbReference type="PANTHER" id="PTHR47806:SF1">
    <property type="entry name" value="RIBOSOMAL PROTEIN UL3 GLUTAMINE METHYLTRANSFERASE"/>
    <property type="match status" value="1"/>
</dbReference>
<dbReference type="Pfam" id="PF05175">
    <property type="entry name" value="MTS"/>
    <property type="match status" value="1"/>
</dbReference>
<dbReference type="PIRSF" id="PIRSF037167">
    <property type="entry name" value="Mtase_YfcB_prd"/>
    <property type="match status" value="1"/>
</dbReference>
<dbReference type="SUPFAM" id="SSF53335">
    <property type="entry name" value="S-adenosyl-L-methionine-dependent methyltransferases"/>
    <property type="match status" value="1"/>
</dbReference>
<gene>
    <name evidence="1" type="primary">prmB</name>
    <name type="ordered locus">VC_2118</name>
</gene>
<name>PRMB_VIBCH</name>
<reference key="1">
    <citation type="journal article" date="2000" name="Nature">
        <title>DNA sequence of both chromosomes of the cholera pathogen Vibrio cholerae.</title>
        <authorList>
            <person name="Heidelberg J.F."/>
            <person name="Eisen J.A."/>
            <person name="Nelson W.C."/>
            <person name="Clayton R.A."/>
            <person name="Gwinn M.L."/>
            <person name="Dodson R.J."/>
            <person name="Haft D.H."/>
            <person name="Hickey E.K."/>
            <person name="Peterson J.D."/>
            <person name="Umayam L.A."/>
            <person name="Gill S.R."/>
            <person name="Nelson K.E."/>
            <person name="Read T.D."/>
            <person name="Tettelin H."/>
            <person name="Richardson D.L."/>
            <person name="Ermolaeva M.D."/>
            <person name="Vamathevan J.J."/>
            <person name="Bass S."/>
            <person name="Qin H."/>
            <person name="Dragoi I."/>
            <person name="Sellers P."/>
            <person name="McDonald L.A."/>
            <person name="Utterback T.R."/>
            <person name="Fleischmann R.D."/>
            <person name="Nierman W.C."/>
            <person name="White O."/>
            <person name="Salzberg S.L."/>
            <person name="Smith H.O."/>
            <person name="Colwell R.R."/>
            <person name="Mekalanos J.J."/>
            <person name="Venter J.C."/>
            <person name="Fraser C.M."/>
        </authorList>
    </citation>
    <scope>NUCLEOTIDE SEQUENCE [LARGE SCALE GENOMIC DNA]</scope>
    <source>
        <strain>ATCC 39315 / El Tor Inaba N16961</strain>
    </source>
</reference>
<evidence type="ECO:0000255" key="1">
    <source>
        <dbReference type="HAMAP-Rule" id="MF_02125"/>
    </source>
</evidence>
<comment type="function">
    <text evidence="1">Methylates large ribosomal subunit protein uL3 on a specific glutamine residue.</text>
</comment>
<comment type="catalytic activity">
    <reaction evidence="1">
        <text>L-glutaminyl-[ribosomal protein uL3] + S-adenosyl-L-methionine = N(5)-methyl-L-glutaminyl-[ribosomal protein uL3] + S-adenosyl-L-homocysteine + H(+)</text>
        <dbReference type="Rhea" id="RHEA:45020"/>
        <dbReference type="Rhea" id="RHEA-COMP:11063"/>
        <dbReference type="Rhea" id="RHEA-COMP:11064"/>
        <dbReference type="ChEBI" id="CHEBI:15378"/>
        <dbReference type="ChEBI" id="CHEBI:30011"/>
        <dbReference type="ChEBI" id="CHEBI:57856"/>
        <dbReference type="ChEBI" id="CHEBI:59789"/>
        <dbReference type="ChEBI" id="CHEBI:61891"/>
        <dbReference type="EC" id="2.1.1.298"/>
    </reaction>
</comment>
<comment type="similarity">
    <text evidence="1">Belongs to the protein N5-glutamine methyltransferase family. PrmB subfamily.</text>
</comment>
<organism>
    <name type="scientific">Vibrio cholerae serotype O1 (strain ATCC 39315 / El Tor Inaba N16961)</name>
    <dbReference type="NCBI Taxonomy" id="243277"/>
    <lineage>
        <taxon>Bacteria</taxon>
        <taxon>Pseudomonadati</taxon>
        <taxon>Pseudomonadota</taxon>
        <taxon>Gammaproteobacteria</taxon>
        <taxon>Vibrionales</taxon>
        <taxon>Vibrionaceae</taxon>
        <taxon>Vibrio</taxon>
    </lineage>
</organism>
<feature type="chain" id="PRO_0000088012" description="Ribosomal protein uL3 glutamine methyltransferase">
    <location>
        <begin position="1"/>
        <end position="314"/>
    </location>
</feature>
<proteinExistence type="inferred from homology"/>
<accession>Q9KQ83</accession>
<protein>
    <recommendedName>
        <fullName evidence="1">Ribosomal protein uL3 glutamine methyltransferase</fullName>
        <shortName evidence="1">uL3 MTase</shortName>
        <ecNumber evidence="1">2.1.1.298</ecNumber>
    </recommendedName>
    <alternativeName>
        <fullName evidence="1">N5-glutamine methyltransferase PrmB</fullName>
    </alternativeName>
</protein>
<keyword id="KW-0489">Methyltransferase</keyword>
<keyword id="KW-1185">Reference proteome</keyword>
<keyword id="KW-0949">S-adenosyl-L-methionine</keyword>
<keyword id="KW-0808">Transferase</keyword>
<sequence>MEAILDKIFVEEAVSELHTLQDMIRWTVSRFNAANLFYGQGTDNAWDEAVQLILPTLYLPIDVPPHVLSSRLTSSERLRVVERVIKRINDRTPVAYLTNKAWFCGLEFFVDSRVLVPRSPIGELIQNRFEPWLTEEPTRIMDLCTGSGCIAIACANAFPEAEVDAIDISVDALNVAEQNIQDHGLEQQVFPIRSDLFRDLPQEQYDLIVTNPPYVDQEDMDSLPSEFRHEPELGLAAGSDGLKLARRILANAPLYLKENGILVCEVGNSMVHMMEQYPHIPFTWLEFENGGHGVFLLTREQLIDCAADFALYKD</sequence>